<accession>E1WTS2</accession>
<protein>
    <recommendedName>
        <fullName>Malonyl-[acyl-carrier protein] O-methyltransferase</fullName>
        <shortName>Malonyl-ACP O-methyltransferase</shortName>
        <ecNumber>2.1.1.197</ecNumber>
    </recommendedName>
    <alternativeName>
        <fullName>Biotin synthesis protein BioC</fullName>
    </alternativeName>
</protein>
<gene>
    <name type="primary">bioC</name>
    <name type="ordered locus">BF638R_1616</name>
</gene>
<evidence type="ECO:0000250" key="1"/>
<evidence type="ECO:0000305" key="2"/>
<keyword id="KW-0093">Biotin biosynthesis</keyword>
<keyword id="KW-0489">Methyltransferase</keyword>
<keyword id="KW-0949">S-adenosyl-L-methionine</keyword>
<keyword id="KW-0808">Transferase</keyword>
<organism>
    <name type="scientific">Bacteroides fragilis (strain 638R)</name>
    <dbReference type="NCBI Taxonomy" id="862962"/>
    <lineage>
        <taxon>Bacteria</taxon>
        <taxon>Pseudomonadati</taxon>
        <taxon>Bacteroidota</taxon>
        <taxon>Bacteroidia</taxon>
        <taxon>Bacteroidales</taxon>
        <taxon>Bacteroidaceae</taxon>
        <taxon>Bacteroides</taxon>
    </lineage>
</organism>
<sequence length="490" mass="55699">MKLKRLYPPQKAVNSLHSETGTGCEVAGCPPLRKEALLFFAGWGMDETPFMHNLPPNKDLIICYDYRSLDFDSTLLSTYEGIYVVAWSMGVWAASQVLPDSNLPLKQSIAINGTPFPIDDMRGIPPAIFEGTLNNLNEATLQKFRRRMCGSGSAFQAFLEIAPQRPVEELKEELVAIGRQYSELPPSTFVWNKAIIGESDHIFPPKNQEQAWQKYCNEIQRYDGAHYDEKILKENLAPAASSKLLIAQRFTKAIGTYPHEARVQQQIARKMCSLLQQHLPAHSLRRVVEFGCGTGTYSRLLLRSFRPEHLLLNDLCEEMRHSCRDILNERVSFLPGDAEALDFPHGTELITSCSVLQWFEHPDAFFRKCENILNAQGYIAFSTFGKENMKEIRQLTGQGLAYRSREELTASLSALYDIVHTEEEVISLNFNNPMEVLYHLKQTGVTGTCNQSWTRSKLNLFCQEYERLFSPGKGSVSLTYHPIYIIAKKR</sequence>
<dbReference type="EC" id="2.1.1.197"/>
<dbReference type="EMBL" id="FQ312004">
    <property type="protein sequence ID" value="CBW22145.1"/>
    <property type="molecule type" value="Genomic_DNA"/>
</dbReference>
<dbReference type="RefSeq" id="WP_014298602.1">
    <property type="nucleotide sequence ID" value="NC_016776.1"/>
</dbReference>
<dbReference type="SMR" id="E1WTS2"/>
<dbReference type="ESTHER" id="bacfr-q64vx6">
    <property type="family name" value="BioG_Pimeloyl-ACP-methyl-esterase"/>
</dbReference>
<dbReference type="KEGG" id="bfg:BF638R_1616"/>
<dbReference type="PATRIC" id="fig|862962.3.peg.1622"/>
<dbReference type="HOGENOM" id="CLU_590080_0_0_10"/>
<dbReference type="UniPathway" id="UPA00078"/>
<dbReference type="Proteomes" id="UP000008560">
    <property type="component" value="Chromosome"/>
</dbReference>
<dbReference type="GO" id="GO:0010340">
    <property type="term" value="F:carboxyl-O-methyltransferase activity"/>
    <property type="evidence" value="ECO:0007669"/>
    <property type="project" value="UniProtKB-UniRule"/>
</dbReference>
<dbReference type="GO" id="GO:0102130">
    <property type="term" value="F:malonyl-CoA methyltransferase activity"/>
    <property type="evidence" value="ECO:0007669"/>
    <property type="project" value="UniProtKB-EC"/>
</dbReference>
<dbReference type="GO" id="GO:0008757">
    <property type="term" value="F:S-adenosylmethionine-dependent methyltransferase activity"/>
    <property type="evidence" value="ECO:0007669"/>
    <property type="project" value="InterPro"/>
</dbReference>
<dbReference type="GO" id="GO:0009102">
    <property type="term" value="P:biotin biosynthetic process"/>
    <property type="evidence" value="ECO:0007669"/>
    <property type="project" value="UniProtKB-UniRule"/>
</dbReference>
<dbReference type="GO" id="GO:0032259">
    <property type="term" value="P:methylation"/>
    <property type="evidence" value="ECO:0007669"/>
    <property type="project" value="UniProtKB-KW"/>
</dbReference>
<dbReference type="CDD" id="cd02440">
    <property type="entry name" value="AdoMet_MTases"/>
    <property type="match status" value="1"/>
</dbReference>
<dbReference type="Gene3D" id="3.40.50.150">
    <property type="entry name" value="Vaccinia Virus protein VP39"/>
    <property type="match status" value="1"/>
</dbReference>
<dbReference type="HAMAP" id="MF_00835">
    <property type="entry name" value="BioC"/>
    <property type="match status" value="1"/>
</dbReference>
<dbReference type="InterPro" id="IPR029058">
    <property type="entry name" value="AB_hydrolase_fold"/>
</dbReference>
<dbReference type="InterPro" id="IPR011814">
    <property type="entry name" value="BioC"/>
</dbReference>
<dbReference type="InterPro" id="IPR007398">
    <property type="entry name" value="BioG"/>
</dbReference>
<dbReference type="InterPro" id="IPR013216">
    <property type="entry name" value="Methyltransf_11"/>
</dbReference>
<dbReference type="InterPro" id="IPR029063">
    <property type="entry name" value="SAM-dependent_MTases_sf"/>
</dbReference>
<dbReference type="NCBIfam" id="TIGR02072">
    <property type="entry name" value="BioC"/>
    <property type="match status" value="1"/>
</dbReference>
<dbReference type="PANTHER" id="PTHR43861:SF1">
    <property type="entry name" value="TRANS-ACONITATE 2-METHYLTRANSFERASE"/>
    <property type="match status" value="1"/>
</dbReference>
<dbReference type="PANTHER" id="PTHR43861">
    <property type="entry name" value="TRANS-ACONITATE 2-METHYLTRANSFERASE-RELATED"/>
    <property type="match status" value="1"/>
</dbReference>
<dbReference type="Pfam" id="PF04301">
    <property type="entry name" value="BioG"/>
    <property type="match status" value="1"/>
</dbReference>
<dbReference type="Pfam" id="PF08241">
    <property type="entry name" value="Methyltransf_11"/>
    <property type="match status" value="1"/>
</dbReference>
<dbReference type="SUPFAM" id="SSF53474">
    <property type="entry name" value="alpha/beta-Hydrolases"/>
    <property type="match status" value="1"/>
</dbReference>
<dbReference type="SUPFAM" id="SSF53335">
    <property type="entry name" value="S-adenosyl-L-methionine-dependent methyltransferases"/>
    <property type="match status" value="1"/>
</dbReference>
<name>BIOC_BACF6</name>
<feature type="chain" id="PRO_0000412483" description="Malonyl-[acyl-carrier protein] O-methyltransferase">
    <location>
        <begin position="1"/>
        <end position="490"/>
    </location>
</feature>
<feature type="region of interest" description="Unknown">
    <location>
        <begin position="1"/>
        <end position="248"/>
    </location>
</feature>
<feature type="region of interest" description="Malonyl-CoA O-methyltransferase">
    <location>
        <begin position="249"/>
        <end position="490"/>
    </location>
</feature>
<reference key="1">
    <citation type="journal article" date="2010" name="Microbiology">
        <title>Twenty-eight divergent polysaccharide loci specifying within- and amongst-strain capsule diversity in three strains of Bacteroides fragilis.</title>
        <authorList>
            <person name="Patrick S."/>
            <person name="Blakely G.W."/>
            <person name="Houston S."/>
            <person name="Moore J."/>
            <person name="Abratt V.R."/>
            <person name="Bertalan M."/>
            <person name="Cerdeno-Tarraga A.M."/>
            <person name="Quail M.A."/>
            <person name="Corton N."/>
            <person name="Corton C."/>
            <person name="Bignell A."/>
            <person name="Barron A."/>
            <person name="Clark L."/>
            <person name="Bentley S.D."/>
            <person name="Parkhill J."/>
        </authorList>
    </citation>
    <scope>NUCLEOTIDE SEQUENCE [LARGE SCALE GENOMIC DNA]</scope>
    <source>
        <strain>638R</strain>
    </source>
</reference>
<comment type="function">
    <text evidence="1">Converts the free carboxyl group of a malonyl-thioester to its methyl ester by transfer of a methyl group from S-adenosyl-L-methionine (SAM). It allows to synthesize pimeloyl-ACP via the fatty acid synthetic pathway (By similarity).</text>
</comment>
<comment type="catalytic activity">
    <reaction>
        <text>malonyl-[ACP] + S-adenosyl-L-methionine = malonyl-[ACP] methyl ester + S-adenosyl-L-homocysteine</text>
        <dbReference type="Rhea" id="RHEA:17105"/>
        <dbReference type="Rhea" id="RHEA-COMP:9623"/>
        <dbReference type="Rhea" id="RHEA-COMP:9954"/>
        <dbReference type="ChEBI" id="CHEBI:57856"/>
        <dbReference type="ChEBI" id="CHEBI:59789"/>
        <dbReference type="ChEBI" id="CHEBI:78449"/>
        <dbReference type="ChEBI" id="CHEBI:78845"/>
        <dbReference type="EC" id="2.1.1.197"/>
    </reaction>
</comment>
<comment type="pathway">
    <text>Cofactor biosynthesis; biotin biosynthesis.</text>
</comment>
<comment type="similarity">
    <text evidence="2">Belongs to the methyltransferase superfamily.</text>
</comment>
<proteinExistence type="inferred from homology"/>